<sequence>MVVIYLNSTGNTYWIPIYSLNDKIREPYIFYVFAIFQTSIYILTGYILVRICWIFLTIKVFHDNMNIMMCWFLCQWFQAFLAKIVLIPYQFGIIKISMDINKTYYDWWSDTVEKSAILREDVNIWPIYFASYFLWHYMYSILFAVLAVGLERVCATWYIQDYEHVSRRHIPILLIAATNLITLPYAYQTTNNRTPLLQTCLQSIFIGSVAVFGYIMLWRVNLAWRNRIVNLKFTHNEKYSLARKFQIEENIKSLILARKLVVSASVFILVVTILLAVLLFDPHGYDAFFVHALDNSMLLPALVMSLTLLSCSPAWKERFISGLPIIRRLKSSSVAHQNSYSTASSAGKETEAYFEQLRSSWA</sequence>
<name>SRE37_CAEEL</name>
<accession>O17818</accession>
<proteinExistence type="inferred from homology"/>
<keyword id="KW-0472">Membrane</keyword>
<keyword id="KW-1185">Reference proteome</keyword>
<keyword id="KW-0812">Transmembrane</keyword>
<keyword id="KW-1133">Transmembrane helix</keyword>
<gene>
    <name type="primary">sre-37</name>
    <name type="ORF">F15A4.3</name>
</gene>
<comment type="subcellular location">
    <subcellularLocation>
        <location evidence="2">Membrane</location>
        <topology evidence="2">Multi-pass membrane protein</topology>
    </subcellularLocation>
</comment>
<comment type="similarity">
    <text evidence="2">Belongs to the nematode receptor-like protein sre family.</text>
</comment>
<organism>
    <name type="scientific">Caenorhabditis elegans</name>
    <dbReference type="NCBI Taxonomy" id="6239"/>
    <lineage>
        <taxon>Eukaryota</taxon>
        <taxon>Metazoa</taxon>
        <taxon>Ecdysozoa</taxon>
        <taxon>Nematoda</taxon>
        <taxon>Chromadorea</taxon>
        <taxon>Rhabditida</taxon>
        <taxon>Rhabditina</taxon>
        <taxon>Rhabditomorpha</taxon>
        <taxon>Rhabditoidea</taxon>
        <taxon>Rhabditidae</taxon>
        <taxon>Peloderinae</taxon>
        <taxon>Caenorhabditis</taxon>
    </lineage>
</organism>
<protein>
    <recommendedName>
        <fullName>Serpentine receptor class epsilon-37</fullName>
        <shortName>Protein sre-37</shortName>
    </recommendedName>
</protein>
<evidence type="ECO:0000255" key="1"/>
<evidence type="ECO:0000305" key="2"/>
<reference key="1">
    <citation type="journal article" date="1998" name="Science">
        <title>Genome sequence of the nematode C. elegans: a platform for investigating biology.</title>
        <authorList>
            <consortium name="The C. elegans sequencing consortium"/>
        </authorList>
    </citation>
    <scope>NUCLEOTIDE SEQUENCE [LARGE SCALE GENOMIC DNA]</scope>
    <source>
        <strain>Bristol N2</strain>
    </source>
</reference>
<feature type="chain" id="PRO_0000104548" description="Serpentine receptor class epsilon-37">
    <location>
        <begin position="1"/>
        <end position="362"/>
    </location>
</feature>
<feature type="transmembrane region" description="Helical" evidence="1">
    <location>
        <begin position="29"/>
        <end position="49"/>
    </location>
</feature>
<feature type="transmembrane region" description="Helical" evidence="1">
    <location>
        <begin position="67"/>
        <end position="87"/>
    </location>
</feature>
<feature type="transmembrane region" description="Helical" evidence="1">
    <location>
        <begin position="127"/>
        <end position="147"/>
    </location>
</feature>
<feature type="transmembrane region" description="Helical" evidence="1">
    <location>
        <begin position="170"/>
        <end position="190"/>
    </location>
</feature>
<feature type="transmembrane region" description="Helical" evidence="1">
    <location>
        <begin position="204"/>
        <end position="224"/>
    </location>
</feature>
<feature type="transmembrane region" description="Helical" evidence="1">
    <location>
        <begin position="260"/>
        <end position="280"/>
    </location>
</feature>
<feature type="transmembrane region" description="Helical" evidence="1">
    <location>
        <begin position="288"/>
        <end position="308"/>
    </location>
</feature>
<dbReference type="EMBL" id="Z81062">
    <property type="protein sequence ID" value="CAB02947.2"/>
    <property type="molecule type" value="Genomic_DNA"/>
</dbReference>
<dbReference type="PIR" id="T20953">
    <property type="entry name" value="T20953"/>
</dbReference>
<dbReference type="RefSeq" id="NP_496655.2">
    <property type="nucleotide sequence ID" value="NM_064254.3"/>
</dbReference>
<dbReference type="FunCoup" id="O17818">
    <property type="interactions" value="10"/>
</dbReference>
<dbReference type="PaxDb" id="6239-F15A4.3"/>
<dbReference type="EnsemblMetazoa" id="F15A4.3.1">
    <property type="protein sequence ID" value="F15A4.3.1"/>
    <property type="gene ID" value="WBGene00008839"/>
</dbReference>
<dbReference type="GeneID" id="184512"/>
<dbReference type="KEGG" id="cel:CELE_F15A4.3"/>
<dbReference type="UCSC" id="F15A4.3">
    <property type="organism name" value="c. elegans"/>
</dbReference>
<dbReference type="AGR" id="WB:WBGene00008839"/>
<dbReference type="CTD" id="184512"/>
<dbReference type="WormBase" id="F15A4.3">
    <property type="protein sequence ID" value="CE37894"/>
    <property type="gene ID" value="WBGene00008839"/>
    <property type="gene designation" value="sre-37"/>
</dbReference>
<dbReference type="eggNOG" id="ENOG502TGKZ">
    <property type="taxonomic scope" value="Eukaryota"/>
</dbReference>
<dbReference type="GeneTree" id="ENSGT01060000248764"/>
<dbReference type="HOGENOM" id="CLU_063305_1_0_1"/>
<dbReference type="InParanoid" id="O17818"/>
<dbReference type="OMA" id="WIPAYSL"/>
<dbReference type="OrthoDB" id="5813618at2759"/>
<dbReference type="PhylomeDB" id="O17818"/>
<dbReference type="PRO" id="PR:O17818"/>
<dbReference type="Proteomes" id="UP000001940">
    <property type="component" value="Chromosome II"/>
</dbReference>
<dbReference type="GO" id="GO:0016020">
    <property type="term" value="C:membrane"/>
    <property type="evidence" value="ECO:0007669"/>
    <property type="project" value="UniProtKB-SubCell"/>
</dbReference>
<dbReference type="GO" id="GO:0007606">
    <property type="term" value="P:sensory perception of chemical stimulus"/>
    <property type="evidence" value="ECO:0007669"/>
    <property type="project" value="InterPro"/>
</dbReference>
<dbReference type="InterPro" id="IPR004151">
    <property type="entry name" value="7TM_GPCR_serpentine_rcpt_Sre"/>
</dbReference>
<dbReference type="PANTHER" id="PTHR23128">
    <property type="entry name" value="SERPENTINE RECEPTOR, CLASS E (EPSILON)-RELATED"/>
    <property type="match status" value="1"/>
</dbReference>
<dbReference type="PANTHER" id="PTHR23128:SF144">
    <property type="entry name" value="SERPENTINE RECEPTOR, CLASS E (EPSILON)-RELATED"/>
    <property type="match status" value="1"/>
</dbReference>
<dbReference type="Pfam" id="PF03125">
    <property type="entry name" value="Sre"/>
    <property type="match status" value="1"/>
</dbReference>